<proteinExistence type="inferred from homology"/>
<gene>
    <name type="primary">SERPINB10</name>
</gene>
<comment type="function">
    <text evidence="1">Protease inhibitor that may play a role in the regulation of protease activities during hematopoiesis and apoptosis induced by TNF. May regulate protease activities in the cytoplasm and in the nucleus (By similarity).</text>
</comment>
<comment type="subcellular location">
    <subcellularLocation>
        <location evidence="1">Nucleus</location>
    </subcellularLocation>
    <subcellularLocation>
        <location evidence="1">Cytoplasm</location>
    </subcellularLocation>
</comment>
<comment type="similarity">
    <text evidence="2">Belongs to the serpin family. Ov-serpin subfamily.</text>
</comment>
<reference key="1">
    <citation type="submission" date="2008-03" db="EMBL/GenBank/DDBJ databases">
        <title>NISC comparative sequencing initiative.</title>
        <authorList>
            <person name="Antonellis A."/>
            <person name="Ayele K."/>
            <person name="Benjamin B."/>
            <person name="Blakesley R.W."/>
            <person name="Boakye A."/>
            <person name="Bouffard G.G."/>
            <person name="Brinkley C."/>
            <person name="Brooks S."/>
            <person name="Chu G."/>
            <person name="Coleman H."/>
            <person name="Engle J."/>
            <person name="Gestole M."/>
            <person name="Greene A."/>
            <person name="Guan X."/>
            <person name="Gupta J."/>
            <person name="Haghighi P."/>
            <person name="Han J."/>
            <person name="Hansen N."/>
            <person name="Ho S.-L."/>
            <person name="Hu P."/>
            <person name="Hunter G."/>
            <person name="Hurle B."/>
            <person name="Idol J.R."/>
            <person name="Kwong P."/>
            <person name="Laric P."/>
            <person name="Larson S."/>
            <person name="Lee-Lin S.-Q."/>
            <person name="Legaspi R."/>
            <person name="Madden M."/>
            <person name="Maduro Q.L."/>
            <person name="Maduro V.B."/>
            <person name="Margulies E.H."/>
            <person name="Masiello C."/>
            <person name="Maskeri B."/>
            <person name="McDowell J."/>
            <person name="Mojidi H.A."/>
            <person name="Mullikin J.C."/>
            <person name="Oestreicher J.S."/>
            <person name="Park M."/>
            <person name="Portnoy M.E."/>
            <person name="Prasad A."/>
            <person name="Puri O."/>
            <person name="Reddix-Dugue N."/>
            <person name="Schandler K."/>
            <person name="Schueler M.G."/>
            <person name="Sison C."/>
            <person name="Stantripop S."/>
            <person name="Stephen E."/>
            <person name="Taye A."/>
            <person name="Thomas J.W."/>
            <person name="Thomas P.J."/>
            <person name="Tsipouri V."/>
            <person name="Ung L."/>
            <person name="Vogt J.L."/>
            <person name="Wetherby K.D."/>
            <person name="Young A."/>
            <person name="Green E.D."/>
        </authorList>
    </citation>
    <scope>NUCLEOTIDE SEQUENCE [LARGE SCALE GENOMIC DNA]</scope>
</reference>
<feature type="chain" id="PRO_0000355546" description="Serpin B10">
    <location>
        <begin position="1"/>
        <end position="397"/>
    </location>
</feature>
<feature type="short sequence motif" description="Nuclear localization signal" evidence="1">
    <location>
        <begin position="74"/>
        <end position="77"/>
    </location>
</feature>
<feature type="site" description="Reactive bond" evidence="1">
    <location>
        <begin position="362"/>
        <end position="363"/>
    </location>
</feature>
<organism>
    <name type="scientific">Plecturocebus moloch</name>
    <name type="common">Dusky titi monkey</name>
    <name type="synonym">Callicebus moloch</name>
    <dbReference type="NCBI Taxonomy" id="9523"/>
    <lineage>
        <taxon>Eukaryota</taxon>
        <taxon>Metazoa</taxon>
        <taxon>Chordata</taxon>
        <taxon>Craniata</taxon>
        <taxon>Vertebrata</taxon>
        <taxon>Euteleostomi</taxon>
        <taxon>Mammalia</taxon>
        <taxon>Eutheria</taxon>
        <taxon>Euarchontoglires</taxon>
        <taxon>Primates</taxon>
        <taxon>Haplorrhini</taxon>
        <taxon>Platyrrhini</taxon>
        <taxon>Pitheciidae</taxon>
        <taxon>Callicebinae</taxon>
        <taxon>Plecturocebus</taxon>
    </lineage>
</organism>
<accession>B1MTC3</accession>
<evidence type="ECO:0000250" key="1"/>
<evidence type="ECO:0000305" key="2"/>
<sequence>MDALATSINQFALELSKKLAESAQGKNIFFSAWSISASLAMVHLGAKGNTAAQMAQVLQFKRDQGVKSDPESEKKRKTEFNLSNSGEIHCNFQTLISEILKPNNDYILKTANAAYSEKTYPFHNKYLEDVKTYFGAEPQSVNFVEASDQIRKEINSWVERQTEGKIQNLLSDDSVGSTTRMVLVNALYFKGIWEHQFLVQNTTEKPFRINETTSKPVQMMFMKEKLQIFHIEKPQALGLQLYYKSCDLSLFILLPEDINGLEQLEKAITYEKLSKWTSADMMEVYDVQLHLPKFKLEESYDLKSTLSSMGMSDAFSESEADFSGMSSARNLFLSNVFHKAFVEIDEQGTEAAAGSGSEISFRIKVPSIEFNANHPFLFFIRHNKTNNILFYGRFCSP</sequence>
<keyword id="KW-0963">Cytoplasm</keyword>
<keyword id="KW-0539">Nucleus</keyword>
<keyword id="KW-0646">Protease inhibitor</keyword>
<keyword id="KW-0722">Serine protease inhibitor</keyword>
<name>SPB10_PLEMO</name>
<protein>
    <recommendedName>
        <fullName>Serpin B10</fullName>
    </recommendedName>
</protein>
<dbReference type="EMBL" id="DP000624">
    <property type="protein sequence ID" value="ACA57868.1"/>
    <property type="molecule type" value="Genomic_DNA"/>
</dbReference>
<dbReference type="SMR" id="B1MTC3"/>
<dbReference type="MEROPS" id="I04.015"/>
<dbReference type="GO" id="GO:0005737">
    <property type="term" value="C:cytoplasm"/>
    <property type="evidence" value="ECO:0007669"/>
    <property type="project" value="UniProtKB-SubCell"/>
</dbReference>
<dbReference type="GO" id="GO:0005615">
    <property type="term" value="C:extracellular space"/>
    <property type="evidence" value="ECO:0007669"/>
    <property type="project" value="InterPro"/>
</dbReference>
<dbReference type="GO" id="GO:0005634">
    <property type="term" value="C:nucleus"/>
    <property type="evidence" value="ECO:0007669"/>
    <property type="project" value="UniProtKB-SubCell"/>
</dbReference>
<dbReference type="GO" id="GO:0004867">
    <property type="term" value="F:serine-type endopeptidase inhibitor activity"/>
    <property type="evidence" value="ECO:0007669"/>
    <property type="project" value="UniProtKB-KW"/>
</dbReference>
<dbReference type="CDD" id="cd19569">
    <property type="entry name" value="serpinB10_bomapin"/>
    <property type="match status" value="1"/>
</dbReference>
<dbReference type="FunFam" id="3.30.497.10:FF:000004">
    <property type="entry name" value="Serpin family B member 1"/>
    <property type="match status" value="1"/>
</dbReference>
<dbReference type="FunFam" id="2.30.39.10:FF:000001">
    <property type="entry name" value="Serpin family B member 2"/>
    <property type="match status" value="1"/>
</dbReference>
<dbReference type="Gene3D" id="2.30.39.10">
    <property type="entry name" value="Alpha-1-antitrypsin, domain 1"/>
    <property type="match status" value="1"/>
</dbReference>
<dbReference type="Gene3D" id="3.30.497.10">
    <property type="entry name" value="Antithrombin, subunit I, domain 2"/>
    <property type="match status" value="1"/>
</dbReference>
<dbReference type="InterPro" id="IPR023795">
    <property type="entry name" value="Serpin_CS"/>
</dbReference>
<dbReference type="InterPro" id="IPR023796">
    <property type="entry name" value="Serpin_dom"/>
</dbReference>
<dbReference type="InterPro" id="IPR000215">
    <property type="entry name" value="Serpin_fam"/>
</dbReference>
<dbReference type="InterPro" id="IPR036186">
    <property type="entry name" value="Serpin_sf"/>
</dbReference>
<dbReference type="InterPro" id="IPR042178">
    <property type="entry name" value="Serpin_sf_1"/>
</dbReference>
<dbReference type="InterPro" id="IPR042185">
    <property type="entry name" value="Serpin_sf_2"/>
</dbReference>
<dbReference type="PANTHER" id="PTHR11461">
    <property type="entry name" value="SERINE PROTEASE INHIBITOR, SERPIN"/>
    <property type="match status" value="1"/>
</dbReference>
<dbReference type="PANTHER" id="PTHR11461:SF175">
    <property type="entry name" value="SERPIN B10"/>
    <property type="match status" value="1"/>
</dbReference>
<dbReference type="Pfam" id="PF00079">
    <property type="entry name" value="Serpin"/>
    <property type="match status" value="1"/>
</dbReference>
<dbReference type="SMART" id="SM00093">
    <property type="entry name" value="SERPIN"/>
    <property type="match status" value="1"/>
</dbReference>
<dbReference type="SUPFAM" id="SSF56574">
    <property type="entry name" value="Serpins"/>
    <property type="match status" value="1"/>
</dbReference>
<dbReference type="PROSITE" id="PS00284">
    <property type="entry name" value="SERPIN"/>
    <property type="match status" value="1"/>
</dbReference>